<organism>
    <name type="scientific">Bos taurus</name>
    <name type="common">Bovine</name>
    <dbReference type="NCBI Taxonomy" id="9913"/>
    <lineage>
        <taxon>Eukaryota</taxon>
        <taxon>Metazoa</taxon>
        <taxon>Chordata</taxon>
        <taxon>Craniata</taxon>
        <taxon>Vertebrata</taxon>
        <taxon>Euteleostomi</taxon>
        <taxon>Mammalia</taxon>
        <taxon>Eutheria</taxon>
        <taxon>Laurasiatheria</taxon>
        <taxon>Artiodactyla</taxon>
        <taxon>Ruminantia</taxon>
        <taxon>Pecora</taxon>
        <taxon>Bovidae</taxon>
        <taxon>Bovinae</taxon>
        <taxon>Bos</taxon>
    </lineage>
</organism>
<accession>Q2M2T7</accession>
<accession>P82667</accession>
<accession>Q7M367</accession>
<evidence type="ECO:0000269" key="1">
    <source>
    </source>
</evidence>
<evidence type="ECO:0000269" key="2">
    <source>
    </source>
</evidence>
<evidence type="ECO:0000269" key="3">
    <source>
    </source>
</evidence>
<evidence type="ECO:0000269" key="4">
    <source ref="2"/>
</evidence>
<evidence type="ECO:0000305" key="5"/>
<evidence type="ECO:0007744" key="6">
    <source>
        <dbReference type="PDB" id="3JD5"/>
    </source>
</evidence>
<evidence type="ECO:0007829" key="7">
    <source>
        <dbReference type="PDB" id="6NEQ"/>
    </source>
</evidence>
<protein>
    <recommendedName>
        <fullName evidence="5">Small ribosomal subunit protein uS3m</fullName>
    </recommendedName>
    <alternativeName>
        <fullName>28S ribosomal protein S24, mitochondrial</fullName>
        <shortName>MRP-S24</shortName>
        <shortName>S24mt</shortName>
    </alternativeName>
</protein>
<feature type="transit peptide" description="Mitochondrion" evidence="4">
    <location>
        <begin position="1"/>
        <end position="35"/>
    </location>
</feature>
<feature type="chain" id="PRO_0000273065" description="Small ribosomal subunit protein uS3m">
    <location>
        <begin position="36"/>
        <end position="167"/>
    </location>
</feature>
<feature type="sequence conflict" description="In Ref. 3; AA sequence." evidence="5" ref="3">
    <original>N</original>
    <variation>D</variation>
    <location>
        <position position="48"/>
    </location>
</feature>
<feature type="sequence conflict" description="In Ref. 2; AA sequence." evidence="5" ref="2">
    <original>H</original>
    <variation>P</variation>
    <location>
        <position position="60"/>
    </location>
</feature>
<feature type="turn" evidence="7">
    <location>
        <begin position="53"/>
        <end position="55"/>
    </location>
</feature>
<feature type="helix" evidence="7">
    <location>
        <begin position="59"/>
        <end position="61"/>
    </location>
</feature>
<feature type="turn" evidence="7">
    <location>
        <begin position="63"/>
        <end position="65"/>
    </location>
</feature>
<feature type="strand" evidence="7">
    <location>
        <begin position="76"/>
        <end position="78"/>
    </location>
</feature>
<feature type="turn" evidence="7">
    <location>
        <begin position="83"/>
        <end position="85"/>
    </location>
</feature>
<feature type="helix" evidence="7">
    <location>
        <begin position="86"/>
        <end position="99"/>
    </location>
</feature>
<feature type="strand" evidence="7">
    <location>
        <begin position="100"/>
        <end position="102"/>
    </location>
</feature>
<feature type="strand" evidence="7">
    <location>
        <begin position="110"/>
        <end position="124"/>
    </location>
</feature>
<feature type="helix" evidence="7">
    <location>
        <begin position="133"/>
        <end position="146"/>
    </location>
</feature>
<feature type="strand" evidence="7">
    <location>
        <begin position="151"/>
        <end position="160"/>
    </location>
</feature>
<comment type="subunit">
    <text evidence="1 2 3">Component of the mitochondrial ribosome small subunit (28S) which comprises a 12S rRNA and about 30 distinct proteins.</text>
</comment>
<comment type="subcellular location">
    <subcellularLocation>
        <location evidence="1 2 3">Mitochondrion</location>
    </subcellularLocation>
</comment>
<comment type="similarity">
    <text evidence="5">Belongs to the universal ribosomal protein uS3 family.</text>
</comment>
<sequence>MVALYCGGGLRPLMLSWSRDLPCIWRALHTSAVCFKNRAARVRVGKGNKPVTYEEAHAPHYIAHRKGWLSLHTGNLDGEDHAAERTVEDVFLRKFMLGTFPGCLADQLILKRRANQVEICALVLRQLPAHKFYFLVGYSETLLSHFYKCPVRLHLQTVPSKVVYKYI</sequence>
<keyword id="KW-0002">3D-structure</keyword>
<keyword id="KW-0903">Direct protein sequencing</keyword>
<keyword id="KW-0496">Mitochondrion</keyword>
<keyword id="KW-1185">Reference proteome</keyword>
<keyword id="KW-0687">Ribonucleoprotein</keyword>
<keyword id="KW-0689">Ribosomal protein</keyword>
<keyword id="KW-0809">Transit peptide</keyword>
<reference key="1">
    <citation type="submission" date="2006-01" db="EMBL/GenBank/DDBJ databases">
        <authorList>
            <consortium name="NIH - Mammalian Gene Collection (MGC) project"/>
        </authorList>
    </citation>
    <scope>NUCLEOTIDE SEQUENCE [LARGE SCALE MRNA]</scope>
    <source>
        <strain>Hereford</strain>
        <tissue>Testis</tissue>
    </source>
</reference>
<reference key="2">
    <citation type="submission" date="2000-07" db="PIR data bank">
        <authorList>
            <person name="O'Brien T.W."/>
        </authorList>
    </citation>
    <scope>PROTEIN SEQUENCE OF 36-69</scope>
</reference>
<reference key="3">
    <citation type="journal article" date="2000" name="J. Biol. Chem.">
        <title>A proteomics approach to the identification of mammalian mitochondrial small subunit ribosomal proteins.</title>
        <authorList>
            <person name="Koc E.C."/>
            <person name="Burkhart W."/>
            <person name="Blackburn K."/>
            <person name="Moseley A."/>
            <person name="Koc H."/>
            <person name="Spremulli L.L."/>
        </authorList>
    </citation>
    <scope>PROTEIN SEQUENCE OF 47-64; 85-92 AND 152-161</scope>
    <scope>IDENTIFICATION IN THE 28S MITOCHONDRIAL RIBOSOME</scope>
    <scope>SUBCELLULAR LOCATION</scope>
    <source>
        <tissue>Liver</tissue>
    </source>
</reference>
<reference key="4">
    <citation type="journal article" date="2001" name="J. Biol. Chem.">
        <title>Proteomic analysis of the mammalian mitochondrial ribosome. Identification of protein components in the 28S small subunit.</title>
        <authorList>
            <person name="Suzuki T."/>
            <person name="Terasaki M."/>
            <person name="Takemoto-Hori C."/>
            <person name="Hanada T."/>
            <person name="Ueda T."/>
            <person name="Wada A."/>
            <person name="Watanabe K."/>
        </authorList>
    </citation>
    <scope>IDENTIFICATION BY MASS SPECTROMETRY</scope>
    <scope>IDENTIFICATION IN THE 28S MITOCHONDRIAL RIBOSOME</scope>
    <scope>SUBCELLULAR LOCATION</scope>
</reference>
<reference evidence="6" key="5">
    <citation type="journal article" date="2014" name="Proc. Natl. Acad. Sci. U.S.A.">
        <title>Cryo-EM structure of the small subunit of the mammalian mitochondrial ribosome.</title>
        <authorList>
            <person name="Kaushal P.S."/>
            <person name="Sharma M.R."/>
            <person name="Booth T.M."/>
            <person name="Haque E.M."/>
            <person name="Tung C.S."/>
            <person name="Sanbonmatsu K.Y."/>
            <person name="Spremulli L.L."/>
            <person name="Agrawal R.K."/>
        </authorList>
    </citation>
    <scope>STRUCTURE BY ELECTRON MICROSCOPY (7.00 ANGSTROMS)</scope>
    <scope>SUBCELLULAR LOCATION</scope>
    <scope>SUBUNIT</scope>
</reference>
<gene>
    <name type="primary">MRPS24</name>
</gene>
<proteinExistence type="evidence at protein level"/>
<dbReference type="EMBL" id="BC111632">
    <property type="protein sequence ID" value="AAI11633.1"/>
    <property type="molecule type" value="mRNA"/>
</dbReference>
<dbReference type="PIR" id="C59326">
    <property type="entry name" value="C59326"/>
</dbReference>
<dbReference type="RefSeq" id="NP_001040066.1">
    <property type="nucleotide sequence ID" value="NM_001046601.2"/>
</dbReference>
<dbReference type="PDB" id="3JD5">
    <property type="method" value="EM"/>
    <property type="resolution" value="7.00 A"/>
    <property type="chains" value="C=1-167"/>
</dbReference>
<dbReference type="PDB" id="6NEQ">
    <property type="method" value="EM"/>
    <property type="resolution" value="3.32 A"/>
    <property type="chains" value="C=1-167"/>
</dbReference>
<dbReference type="PDB" id="6NF8">
    <property type="method" value="EM"/>
    <property type="resolution" value="3.48 A"/>
    <property type="chains" value="C=1-167"/>
</dbReference>
<dbReference type="PDBsum" id="3JD5"/>
<dbReference type="PDBsum" id="6NEQ"/>
<dbReference type="PDBsum" id="6NF8"/>
<dbReference type="EMDB" id="EMD-9358"/>
<dbReference type="EMDB" id="EMD-9362"/>
<dbReference type="SMR" id="Q2M2T7"/>
<dbReference type="CORUM" id="Q2M2T7"/>
<dbReference type="FunCoup" id="Q2M2T7">
    <property type="interactions" value="812"/>
</dbReference>
<dbReference type="IntAct" id="Q2M2T7">
    <property type="interactions" value="1"/>
</dbReference>
<dbReference type="STRING" id="9913.ENSBTAP00000009724"/>
<dbReference type="PaxDb" id="9913-ENSBTAP00000009724"/>
<dbReference type="GeneID" id="617466"/>
<dbReference type="KEGG" id="bta:617466"/>
<dbReference type="CTD" id="64951"/>
<dbReference type="eggNOG" id="ENOG502RXU1">
    <property type="taxonomic scope" value="Eukaryota"/>
</dbReference>
<dbReference type="HOGENOM" id="CLU_134150_0_0_1"/>
<dbReference type="InParanoid" id="Q2M2T7"/>
<dbReference type="OrthoDB" id="5950413at2759"/>
<dbReference type="TreeFam" id="TF324311"/>
<dbReference type="Proteomes" id="UP000009136">
    <property type="component" value="Unplaced"/>
</dbReference>
<dbReference type="GO" id="GO:0005743">
    <property type="term" value="C:mitochondrial inner membrane"/>
    <property type="evidence" value="ECO:0000304"/>
    <property type="project" value="Reactome"/>
</dbReference>
<dbReference type="GO" id="GO:0005763">
    <property type="term" value="C:mitochondrial small ribosomal subunit"/>
    <property type="evidence" value="ECO:0000314"/>
    <property type="project" value="UniProtKB"/>
</dbReference>
<dbReference type="GO" id="GO:0003735">
    <property type="term" value="F:structural constituent of ribosome"/>
    <property type="evidence" value="ECO:0007005"/>
    <property type="project" value="UniProtKB"/>
</dbReference>
<dbReference type="GO" id="GO:0032543">
    <property type="term" value="P:mitochondrial translation"/>
    <property type="evidence" value="ECO:0007005"/>
    <property type="project" value="UniProtKB"/>
</dbReference>
<dbReference type="InterPro" id="IPR026146">
    <property type="entry name" value="Ribosomal_uS3m"/>
</dbReference>
<dbReference type="PANTHER" id="PTHR21244">
    <property type="entry name" value="MITOCHONDRIAL 28S RIBOSOMAL PROTEIN S24"/>
    <property type="match status" value="1"/>
</dbReference>
<dbReference type="PANTHER" id="PTHR21244:SF1">
    <property type="entry name" value="SMALL RIBOSOMAL SUBUNIT PROTEIN US3M"/>
    <property type="match status" value="1"/>
</dbReference>
<dbReference type="Pfam" id="PF14955">
    <property type="entry name" value="MRP-S24"/>
    <property type="match status" value="1"/>
</dbReference>
<name>RT24_BOVIN</name>